<gene>
    <name evidence="1" type="primary">rpsB</name>
    <name type="ordered locus">SG1943</name>
</gene>
<organism>
    <name type="scientific">Sodalis glossinidius (strain morsitans)</name>
    <dbReference type="NCBI Taxonomy" id="343509"/>
    <lineage>
        <taxon>Bacteria</taxon>
        <taxon>Pseudomonadati</taxon>
        <taxon>Pseudomonadota</taxon>
        <taxon>Gammaproteobacteria</taxon>
        <taxon>Enterobacterales</taxon>
        <taxon>Bruguierivoracaceae</taxon>
        <taxon>Sodalis</taxon>
    </lineage>
</organism>
<evidence type="ECO:0000255" key="1">
    <source>
        <dbReference type="HAMAP-Rule" id="MF_00291"/>
    </source>
</evidence>
<evidence type="ECO:0000305" key="2"/>
<comment type="similarity">
    <text evidence="1">Belongs to the universal ribosomal protein uS2 family.</text>
</comment>
<proteinExistence type="inferred from homology"/>
<protein>
    <recommendedName>
        <fullName evidence="1">Small ribosomal subunit protein uS2</fullName>
    </recommendedName>
    <alternativeName>
        <fullName evidence="2">30S ribosomal protein S2</fullName>
    </alternativeName>
</protein>
<accession>Q2NRK7</accession>
<sequence>MATVSMRDMLQAGVHFGHQTRYWNPKMKPFIFGARNKVHIINLEQTVPLFNDALAELNKIASRKGKILFVGTKRAASEAVKEAANSCDQFFVNHRWLGGMLTNWKTVRQSIKRLKDLETQSQDGTFEKLTKKEALMRTRELDKLENSLGGIKDMGGLPDALFVIDAEHEHIAINEANNLGIPVFAIVDTNSDPDGVDFIIPGNDDAIRAINLYLTAVATTVRKGRSQDLAEQAEESFVEAE</sequence>
<keyword id="KW-0687">Ribonucleoprotein</keyword>
<keyword id="KW-0689">Ribosomal protein</keyword>
<reference key="1">
    <citation type="journal article" date="2006" name="Genome Res.">
        <title>Massive genome erosion and functional adaptations provide insights into the symbiotic lifestyle of Sodalis glossinidius in the tsetse host.</title>
        <authorList>
            <person name="Toh H."/>
            <person name="Weiss B.L."/>
            <person name="Perkin S.A.H."/>
            <person name="Yamashita A."/>
            <person name="Oshima K."/>
            <person name="Hattori M."/>
            <person name="Aksoy S."/>
        </authorList>
    </citation>
    <scope>NUCLEOTIDE SEQUENCE [LARGE SCALE GENOMIC DNA]</scope>
    <source>
        <strain>morsitans</strain>
    </source>
</reference>
<name>RS2_SODGM</name>
<dbReference type="EMBL" id="AP008232">
    <property type="protein sequence ID" value="BAE75218.1"/>
    <property type="molecule type" value="Genomic_DNA"/>
</dbReference>
<dbReference type="RefSeq" id="WP_011411674.1">
    <property type="nucleotide sequence ID" value="NC_007712.1"/>
</dbReference>
<dbReference type="SMR" id="Q2NRK7"/>
<dbReference type="STRING" id="343509.SG1943"/>
<dbReference type="KEGG" id="sgl:SG1943"/>
<dbReference type="eggNOG" id="COG0052">
    <property type="taxonomic scope" value="Bacteria"/>
</dbReference>
<dbReference type="HOGENOM" id="CLU_040318_1_0_6"/>
<dbReference type="OrthoDB" id="9808036at2"/>
<dbReference type="BioCyc" id="SGLO343509:SGP1_RS17840-MONOMER"/>
<dbReference type="Proteomes" id="UP000001932">
    <property type="component" value="Chromosome"/>
</dbReference>
<dbReference type="GO" id="GO:0022627">
    <property type="term" value="C:cytosolic small ribosomal subunit"/>
    <property type="evidence" value="ECO:0007669"/>
    <property type="project" value="TreeGrafter"/>
</dbReference>
<dbReference type="GO" id="GO:0003735">
    <property type="term" value="F:structural constituent of ribosome"/>
    <property type="evidence" value="ECO:0007669"/>
    <property type="project" value="InterPro"/>
</dbReference>
<dbReference type="GO" id="GO:0006412">
    <property type="term" value="P:translation"/>
    <property type="evidence" value="ECO:0007669"/>
    <property type="project" value="UniProtKB-UniRule"/>
</dbReference>
<dbReference type="CDD" id="cd01425">
    <property type="entry name" value="RPS2"/>
    <property type="match status" value="1"/>
</dbReference>
<dbReference type="FunFam" id="1.10.287.610:FF:000001">
    <property type="entry name" value="30S ribosomal protein S2"/>
    <property type="match status" value="1"/>
</dbReference>
<dbReference type="Gene3D" id="3.40.50.10490">
    <property type="entry name" value="Glucose-6-phosphate isomerase like protein, domain 1"/>
    <property type="match status" value="1"/>
</dbReference>
<dbReference type="Gene3D" id="1.10.287.610">
    <property type="entry name" value="Helix hairpin bin"/>
    <property type="match status" value="1"/>
</dbReference>
<dbReference type="HAMAP" id="MF_00291_B">
    <property type="entry name" value="Ribosomal_uS2_B"/>
    <property type="match status" value="1"/>
</dbReference>
<dbReference type="InterPro" id="IPR001865">
    <property type="entry name" value="Ribosomal_uS2"/>
</dbReference>
<dbReference type="InterPro" id="IPR005706">
    <property type="entry name" value="Ribosomal_uS2_bac/mit/plastid"/>
</dbReference>
<dbReference type="InterPro" id="IPR018130">
    <property type="entry name" value="Ribosomal_uS2_CS"/>
</dbReference>
<dbReference type="InterPro" id="IPR023591">
    <property type="entry name" value="Ribosomal_uS2_flav_dom_sf"/>
</dbReference>
<dbReference type="NCBIfam" id="TIGR01011">
    <property type="entry name" value="rpsB_bact"/>
    <property type="match status" value="1"/>
</dbReference>
<dbReference type="PANTHER" id="PTHR12534">
    <property type="entry name" value="30S RIBOSOMAL PROTEIN S2 PROKARYOTIC AND ORGANELLAR"/>
    <property type="match status" value="1"/>
</dbReference>
<dbReference type="PANTHER" id="PTHR12534:SF0">
    <property type="entry name" value="SMALL RIBOSOMAL SUBUNIT PROTEIN US2M"/>
    <property type="match status" value="1"/>
</dbReference>
<dbReference type="Pfam" id="PF00318">
    <property type="entry name" value="Ribosomal_S2"/>
    <property type="match status" value="1"/>
</dbReference>
<dbReference type="PRINTS" id="PR00395">
    <property type="entry name" value="RIBOSOMALS2"/>
</dbReference>
<dbReference type="SUPFAM" id="SSF52313">
    <property type="entry name" value="Ribosomal protein S2"/>
    <property type="match status" value="1"/>
</dbReference>
<dbReference type="PROSITE" id="PS00962">
    <property type="entry name" value="RIBOSOMAL_S2_1"/>
    <property type="match status" value="1"/>
</dbReference>
<dbReference type="PROSITE" id="PS00963">
    <property type="entry name" value="RIBOSOMAL_S2_2"/>
    <property type="match status" value="1"/>
</dbReference>
<feature type="chain" id="PRO_1000004076" description="Small ribosomal subunit protein uS2">
    <location>
        <begin position="1"/>
        <end position="241"/>
    </location>
</feature>